<protein>
    <recommendedName>
        <fullName>Transcription factor E2FA</fullName>
    </recommendedName>
    <alternativeName>
        <fullName>E2F transcription factor-3</fullName>
        <shortName>AtE2F3</shortName>
    </alternativeName>
</protein>
<gene>
    <name type="primary">E2FA</name>
    <name type="synonym">E2F3</name>
    <name type="synonym">E2F4</name>
    <name type="ordered locus">At2g36010</name>
    <name type="ORF">F11F19.8</name>
</gene>
<comment type="function">
    <text evidence="4 5 6 8 9 10 11 12 13">Transcription activator that binds DNA cooperatively with DP proteins through the E2 recognition site, 5'-TTTC[CG]CGC-3' found in the promoter region of a number of genes whose products are involved in cell cycle regulation or in DNA replication. The binding of retinoblastoma-related proteins represses transactivation. Regulates gene expression both positively and negatively. Activates the expression of E2FB. Involved in the control of cell-cycle progression from G1 to S phase. Stimulates cell proliferation and delays differentiation.</text>
</comment>
<comment type="subunit">
    <text evidence="3 4 5 7 9">Heterodimer with DP proteins. Interacts (via dimerization domain) preferentially with DPA, but also with DPB. Interacts with maize retinoblastoma-related protein RBR1. No interaction with E2FD.</text>
</comment>
<comment type="interaction">
    <interactant intactId="EBI-1774747">
        <id>Q9FNY0</id>
    </interactant>
    <interactant intactId="EBI-1774763">
        <id>Q9FNY3</id>
        <label>DPA</label>
    </interactant>
    <organismsDiffer>false</organismsDiffer>
    <experiments>6</experiments>
</comment>
<comment type="interaction">
    <interactant intactId="EBI-1774747">
        <id>Q9FNY0</id>
    </interactant>
    <interactant intactId="EBI-1774876">
        <id>Q9FNY2</id>
        <label>DPB</label>
    </interactant>
    <organismsDiffer>false</organismsDiffer>
    <experiments>5</experiments>
</comment>
<comment type="interaction">
    <interactant intactId="EBI-1774747">
        <id>Q9FNY0</id>
    </interactant>
    <interactant intactId="EBI-398590">
        <id>Q9LKZ3</id>
        <label>RBR1</label>
    </interactant>
    <organismsDiffer>false</organismsDiffer>
    <experiments>4</experiments>
</comment>
<comment type="subcellular location">
    <subcellularLocation>
        <location evidence="9">Cytoplasm</location>
    </subcellularLocation>
    <subcellularLocation>
        <location evidence="9">Nucleus</location>
    </subcellularLocation>
    <text>Interaction with DPA induces an exclusive nuclear localization, but an interaction with DPB has no effect.</text>
</comment>
<comment type="alternative products">
    <event type="alternative splicing"/>
    <isoform>
        <id>Q9FNY0-1</id>
        <name>1</name>
        <sequence type="displayed"/>
    </isoform>
    <isoform>
        <id>Q9FNY0-2</id>
        <name>2</name>
        <sequence type="described" ref="VSP_040803"/>
    </isoform>
    <isoform>
        <id>Q9FNY0-3</id>
        <name>3</name>
        <sequence type="described" ref="VSP_040801 VSP_040802"/>
    </isoform>
</comment>
<comment type="tissue specificity">
    <text evidence="3 8">Highly expressed in the shoot apical meristem, emerging leaf primordia, and vascular tissues of young leaf primordia. Expressed in flowers, in epidermis and cortex of hypocotyls, and at lower levels in leaves.</text>
</comment>
<comment type="developmental stage">
    <text evidence="3 4 5">Expressed in a cell cycle-dependent manner. Most abundant in early S phase. Decreased expression during the passage into G2.</text>
</comment>
<comment type="domain">
    <text>The C-terminal region (366-485) is required for transactivational activity. The N-terminal region (92-128) is important for nuclear localization.</text>
</comment>
<comment type="similarity">
    <text evidence="15">Belongs to the E2F/DP family.</text>
</comment>
<name>E2FA_ARATH</name>
<reference key="1">
    <citation type="journal article" date="2000" name="FEBS Lett.">
        <title>Characterization of two distinct DP-related genes from Arabidopsis thaliana.</title>
        <authorList>
            <person name="Magyar Z."/>
            <person name="Atanassova A."/>
            <person name="De Veylder L."/>
            <person name="Rombauts S."/>
            <person name="Inze D."/>
        </authorList>
    </citation>
    <scope>NUCLEOTIDE SEQUENCE [MRNA] (ISOFORM 1)</scope>
    <scope>INTERACTION WITH DPA AND DPB</scope>
    <scope>TISSUE SPECIFICITY</scope>
    <scope>DEVELOPMENTAL STAGE</scope>
</reference>
<reference key="2">
    <citation type="journal article" date="2001" name="Plant Mol. Biol.">
        <title>Arabidopsis E2F1 binds a sequence present in the promoter of S-phase-regulated gene AtCDC6 and is a member of a multigene family with differential activities.</title>
        <authorList>
            <person name="de Jager S.M."/>
            <person name="Menges M."/>
            <person name="Bauer U.M."/>
            <person name="Murra J.A."/>
        </authorList>
    </citation>
    <scope>NUCLEOTIDE SEQUENCE [MRNA] (ISOFORM 1)</scope>
    <scope>FUNCTION</scope>
    <scope>INTERACTION WITH MAIZE RBR1</scope>
    <scope>DEVELOPMENTAL STAGE</scope>
    <source>
        <strain>cv. Columbia</strain>
    </source>
</reference>
<reference key="3">
    <citation type="journal article" date="2002" name="J. Biol. Chem.">
        <title>The E2F family of transcription factors from Arabidopsis thaliana. Novel and conserved components of the retinoblastoma/E2F pathway in plants.</title>
        <authorList>
            <person name="Mariconti L."/>
            <person name="Pellegrini B."/>
            <person name="Cantoni R."/>
            <person name="Stevens R."/>
            <person name="Bergounioux C."/>
            <person name="Cella R."/>
            <person name="Albani D."/>
        </authorList>
    </citation>
    <scope>NUCLEOTIDE SEQUENCE [MRNA] (ISOFORM 1)</scope>
    <scope>FUNCTION</scope>
    <scope>INTERACTION WITH DPA AND DPB</scope>
    <scope>DEVELOPMENTAL STAGE</scope>
    <scope>GENE FAMILY</scope>
    <scope>NOMENCLATURE</scope>
    <source>
        <strain>cv. Columbia</strain>
    </source>
</reference>
<reference key="4">
    <citation type="submission" date="2000-01" db="EMBL/GenBank/DDBJ databases">
        <title>Isolation and characterization of E2F-like protein in Arabidopsis thaliana.</title>
        <authorList>
            <person name="Labra M."/>
            <person name="Ghiani A."/>
            <person name="Citterio S."/>
            <person name="Sgorbati S."/>
        </authorList>
    </citation>
    <scope>NUCLEOTIDE SEQUENCE [MRNA] (ISOFORM 3)</scope>
</reference>
<reference key="5">
    <citation type="journal article" date="1999" name="Nature">
        <title>Sequence and analysis of chromosome 2 of the plant Arabidopsis thaliana.</title>
        <authorList>
            <person name="Lin X."/>
            <person name="Kaul S."/>
            <person name="Rounsley S.D."/>
            <person name="Shea T.P."/>
            <person name="Benito M.-I."/>
            <person name="Town C.D."/>
            <person name="Fujii C.Y."/>
            <person name="Mason T.M."/>
            <person name="Bowman C.L."/>
            <person name="Barnstead M.E."/>
            <person name="Feldblyum T.V."/>
            <person name="Buell C.R."/>
            <person name="Ketchum K.A."/>
            <person name="Lee J.J."/>
            <person name="Ronning C.M."/>
            <person name="Koo H.L."/>
            <person name="Moffat K.S."/>
            <person name="Cronin L.A."/>
            <person name="Shen M."/>
            <person name="Pai G."/>
            <person name="Van Aken S."/>
            <person name="Umayam L."/>
            <person name="Tallon L.J."/>
            <person name="Gill J.E."/>
            <person name="Adams M.D."/>
            <person name="Carrera A.J."/>
            <person name="Creasy T.H."/>
            <person name="Goodman H.M."/>
            <person name="Somerville C.R."/>
            <person name="Copenhaver G.P."/>
            <person name="Preuss D."/>
            <person name="Nierman W.C."/>
            <person name="White O."/>
            <person name="Eisen J.A."/>
            <person name="Salzberg S.L."/>
            <person name="Fraser C.M."/>
            <person name="Venter J.C."/>
        </authorList>
    </citation>
    <scope>NUCLEOTIDE SEQUENCE [LARGE SCALE GENOMIC DNA]</scope>
    <source>
        <strain>cv. Columbia</strain>
    </source>
</reference>
<reference key="6">
    <citation type="journal article" date="2017" name="Plant J.">
        <title>Araport11: a complete reannotation of the Arabidopsis thaliana reference genome.</title>
        <authorList>
            <person name="Cheng C.Y."/>
            <person name="Krishnakumar V."/>
            <person name="Chan A.P."/>
            <person name="Thibaud-Nissen F."/>
            <person name="Schobel S."/>
            <person name="Town C.D."/>
        </authorList>
    </citation>
    <scope>GENOME REANNOTATION</scope>
    <source>
        <strain>cv. Columbia</strain>
    </source>
</reference>
<reference key="7">
    <citation type="submission" date="2006-08" db="EMBL/GenBank/DDBJ databases">
        <title>Arabidopsis ORF Clones.</title>
        <authorList>
            <person name="Quinitio C."/>
            <person name="Chen H."/>
            <person name="Kim C.J."/>
            <person name="Shinn P."/>
            <person name="Ecker J.R."/>
        </authorList>
    </citation>
    <scope>NUCLEOTIDE SEQUENCE [LARGE SCALE MRNA] (ISOFORM 1)</scope>
</reference>
<reference key="8">
    <citation type="journal article" date="2002" name="EMBO J.">
        <title>Control of proliferation, endoreduplication and differentiation by the Arabidopsis E2Fa-DPa transcription factor.</title>
        <authorList>
            <person name="De Veylder L."/>
            <person name="Beeckman T."/>
            <person name="Beemster G.T."/>
            <person name="de Almeida Engler J."/>
            <person name="Ormenese S."/>
            <person name="Maes S."/>
            <person name="Naudts M."/>
            <person name="Van Der Schueren E."/>
            <person name="Jacqmard A."/>
            <person name="Engler G."/>
            <person name="Inze D."/>
        </authorList>
    </citation>
    <scope>FUNCTION</scope>
    <scope>TISSUE SPECIFICITY</scope>
</reference>
<reference key="9">
    <citation type="journal article" date="2002" name="J. Biol. Chem.">
        <title>E2Ls, E2F-like repressors of Arabidopsis that bind to E2F sites in a monomeric form.</title>
        <authorList>
            <person name="Kosugi S."/>
            <person name="Ohashi Y."/>
        </authorList>
    </citation>
    <scope>INTERACTION WITH DPA; DPB AND E2FD</scope>
</reference>
<reference key="10">
    <citation type="journal article" date="2002" name="Mol. Genet. Genomics">
        <title>AtE2F-a and AtDP-a, members of the E2F family of transcription factors, induce Arabidopsis leaf cells to re-enter S phase.</title>
        <authorList>
            <person name="Rossignol P."/>
            <person name="Stevens R."/>
            <person name="Perennes C."/>
            <person name="Jasinski S."/>
            <person name="Cella R."/>
            <person name="Tremousaygue D."/>
            <person name="Bergounioux C."/>
        </authorList>
    </citation>
    <scope>FUNCTION</scope>
</reference>
<reference key="11">
    <citation type="journal article" date="2002" name="Plant Cell">
        <title>Genome-wide analysis of core cell cycle genes in Arabidopsis.</title>
        <authorList>
            <person name="Vandepoele K."/>
            <person name="Raes J."/>
            <person name="de Veylder L."/>
            <person name="Rouze P."/>
            <person name="Rombauts S."/>
            <person name="Inze D."/>
        </authorList>
    </citation>
    <scope>GENE FAMILY</scope>
    <scope>NOMENCLATURE</scope>
</reference>
<reference key="12">
    <citation type="journal article" date="2002" name="Plant Physiol.">
        <title>Interaction of the Arabidopsis E2F and DP proteins confers their concomitant nuclear translocation and transactivation.</title>
        <authorList>
            <person name="Kosugi S."/>
            <person name="Ohashi Y."/>
        </authorList>
    </citation>
    <scope>FUNCTION</scope>
    <scope>SUBCELLULAR LOCATION</scope>
    <scope>INTERACTION WITH DPA AND DPB</scope>
    <source>
        <strain>cv. Columbia</strain>
    </source>
</reference>
<reference key="13">
    <citation type="journal article" date="2003" name="Plant Physiol.">
        <title>Constitutive E2F expression in tobacco plants exhibits altered cell cycle control and morphological change in a cell type-specific manner.</title>
        <authorList>
            <person name="Kosugi S."/>
            <person name="Ohashi Y."/>
        </authorList>
    </citation>
    <scope>FUNCTION</scope>
</reference>
<reference key="14">
    <citation type="journal article" date="2004" name="Plant Cell">
        <title>The plant-specific cyclin-dependent kinase CDKB1;1 and transcription factor E2Fa-DPa control the balance of mitotically dividing and endoreduplicating cells in Arabidopsis.</title>
        <authorList>
            <person name="Boudolf V."/>
            <person name="Vlieghe K."/>
            <person name="Beemster G.T.S."/>
            <person name="Magyar Z."/>
            <person name="Torres Acosta J.A."/>
            <person name="Maes S."/>
            <person name="Van Der Schueren E."/>
            <person name="Inze D."/>
            <person name="De Veylder L."/>
        </authorList>
    </citation>
    <scope>FUNCTION</scope>
</reference>
<reference key="15">
    <citation type="journal article" date="2006" name="Plant Physiol.">
        <title>Interplay between Arabidopsis activating factors E2Fb and E2Fa in cell cycle progression and development.</title>
        <authorList>
            <person name="Sozzani R."/>
            <person name="Maggio C."/>
            <person name="Varotto S."/>
            <person name="Canova S."/>
            <person name="Bergounioux C."/>
            <person name="Albani D."/>
            <person name="Cella R."/>
        </authorList>
    </citation>
    <scope>FUNCTION</scope>
</reference>
<reference key="16">
    <citation type="journal article" date="2009" name="Plant Mol. Biol.">
        <title>Dissecting regulatory pathways of G1/S control in Arabidopsis: common and distinct targets of CYCD3;1, E2Fa and E2Fc.</title>
        <authorList>
            <person name="de Jager S.M."/>
            <person name="Scofield S."/>
            <person name="Huntley R.P."/>
            <person name="Robinson A.S."/>
            <person name="den Boer B.G."/>
            <person name="Murray J.A."/>
        </authorList>
    </citation>
    <scope>FUNCTION</scope>
</reference>
<feature type="chain" id="PRO_0000406289" description="Transcription factor E2FA">
    <location>
        <begin position="1"/>
        <end position="485"/>
    </location>
</feature>
<feature type="DNA-binding region">
    <location>
        <begin position="167"/>
        <end position="232"/>
    </location>
</feature>
<feature type="region of interest" description="Disordered" evidence="2">
    <location>
        <begin position="1"/>
        <end position="69"/>
    </location>
</feature>
<feature type="region of interest" description="Disordered" evidence="2">
    <location>
        <begin position="114"/>
        <end position="159"/>
    </location>
</feature>
<feature type="region of interest" description="Leucine-zipper">
    <location>
        <begin position="249"/>
        <end position="277"/>
    </location>
</feature>
<feature type="region of interest" description="Retinoblastoma protein binding" evidence="1">
    <location>
        <begin position="435"/>
        <end position="450"/>
    </location>
</feature>
<feature type="coiled-coil region" evidence="1">
    <location>
        <begin position="245"/>
        <end position="286"/>
    </location>
</feature>
<feature type="compositionally biased region" description="Low complexity" evidence="2">
    <location>
        <begin position="1"/>
        <end position="11"/>
    </location>
</feature>
<feature type="compositionally biased region" description="Pro residues" evidence="2">
    <location>
        <begin position="12"/>
        <end position="26"/>
    </location>
</feature>
<feature type="compositionally biased region" description="Polar residues" evidence="2">
    <location>
        <begin position="114"/>
        <end position="125"/>
    </location>
</feature>
<feature type="compositionally biased region" description="Basic residues" evidence="2">
    <location>
        <begin position="129"/>
        <end position="141"/>
    </location>
</feature>
<feature type="compositionally biased region" description="Polar residues" evidence="2">
    <location>
        <begin position="142"/>
        <end position="159"/>
    </location>
</feature>
<feature type="splice variant" id="VSP_040801" description="In isoform 3." evidence="14">
    <original>P</original>
    <variation>PIFPSEIGLEIRGCFGDFDCYLLLLSLIQKLRSVRLSSIRVNFCRLFSFAM</variation>
    <location>
        <position position="92"/>
    </location>
</feature>
<feature type="splice variant" id="VSP_040802" description="In isoform 3." evidence="14">
    <original>GSPITLTPSGSCRYDSSLG</original>
    <variation>VRSFYEISFMSRVTS</variation>
    <location>
        <begin position="155"/>
        <end position="173"/>
    </location>
</feature>
<feature type="splice variant" id="VSP_040803" description="In isoform 2." evidence="15">
    <location>
        <begin position="247"/>
        <end position="248"/>
    </location>
</feature>
<feature type="sequence conflict" description="In Ref. 1; CAC15486." evidence="15" ref="1">
    <original>D</original>
    <variation>G</variation>
    <location>
        <position position="264"/>
    </location>
</feature>
<evidence type="ECO:0000255" key="1"/>
<evidence type="ECO:0000256" key="2">
    <source>
        <dbReference type="SAM" id="MobiDB-lite"/>
    </source>
</evidence>
<evidence type="ECO:0000269" key="3">
    <source>
    </source>
</evidence>
<evidence type="ECO:0000269" key="4">
    <source>
    </source>
</evidence>
<evidence type="ECO:0000269" key="5">
    <source>
    </source>
</evidence>
<evidence type="ECO:0000269" key="6">
    <source>
    </source>
</evidence>
<evidence type="ECO:0000269" key="7">
    <source>
    </source>
</evidence>
<evidence type="ECO:0000269" key="8">
    <source>
    </source>
</evidence>
<evidence type="ECO:0000269" key="9">
    <source>
    </source>
</evidence>
<evidence type="ECO:0000269" key="10">
    <source>
    </source>
</evidence>
<evidence type="ECO:0000269" key="11">
    <source>
    </source>
</evidence>
<evidence type="ECO:0000269" key="12">
    <source>
    </source>
</evidence>
<evidence type="ECO:0000269" key="13">
    <source>
    </source>
</evidence>
<evidence type="ECO:0000303" key="14">
    <source ref="4"/>
</evidence>
<evidence type="ECO:0000305" key="15"/>
<sequence>MSGVVRSSPGSSQPPPPPPHHPPSSPVPVTSTPVIPPIRRHLAFASTKPPFHPSDDYHRFNPSSLSNNNDRSFVHGCGVVDREEDAVVVRSPSRKRKATMDMVVAPSNNGFTSSGFTNIPSSPCQTPRKGGRVNIKSKAKGNKSTPQTPISTNAGSPITLTPSGSCRYDSSLGLLTKKFVNLIKQAKDGMLDLNKAAETLEVQKRRIYDITNVLEGIDLIEKPFKNRILWKGVDACPGDEDADVSVLQLQAEIENLALEEQALDNQIRQTEERLRDLSENEKNQKWLFVTEEDIKSLPGFQNQTLIAVKAPHGTTLEVPDPDEAADHPQRRYRIILRSTMGPIDVYLVSEFEGKFEDTNGSGAAPPACLPIASSSGSTGHHDIEALTVDNPETAIVSHDHPHPQPGDTSDLNYLQEQVGGMLKITPSDVENDESDYWLLSNAEISMTDIWKTDSGIDWDYGIADVSTPPPGMGEIAPTAVDSTPR</sequence>
<dbReference type="EMBL" id="AJ294534">
    <property type="protein sequence ID" value="CAC15486.1"/>
    <property type="molecule type" value="mRNA"/>
</dbReference>
<dbReference type="EMBL" id="AF242582">
    <property type="protein sequence ID" value="AAG17610.1"/>
    <property type="molecule type" value="mRNA"/>
</dbReference>
<dbReference type="EMBL" id="AJ276619">
    <property type="protein sequence ID" value="CAC34724.1"/>
    <property type="molecule type" value="mRNA"/>
</dbReference>
<dbReference type="EMBL" id="AJ271597">
    <property type="protein sequence ID" value="CAB70599.1"/>
    <property type="molecule type" value="mRNA"/>
</dbReference>
<dbReference type="EMBL" id="AC007017">
    <property type="protein sequence ID" value="AAD21456.2"/>
    <property type="molecule type" value="Genomic_DNA"/>
</dbReference>
<dbReference type="EMBL" id="CP002685">
    <property type="protein sequence ID" value="AEC09191.1"/>
    <property type="molecule type" value="Genomic_DNA"/>
</dbReference>
<dbReference type="EMBL" id="CP002685">
    <property type="protein sequence ID" value="AEC09192.1"/>
    <property type="molecule type" value="Genomic_DNA"/>
</dbReference>
<dbReference type="EMBL" id="BT026376">
    <property type="protein sequence ID" value="ABH04483.1"/>
    <property type="molecule type" value="mRNA"/>
</dbReference>
<dbReference type="PIR" id="G84775">
    <property type="entry name" value="G84775"/>
</dbReference>
<dbReference type="RefSeq" id="NP_565831.3">
    <molecule id="Q9FNY0-2"/>
    <property type="nucleotide sequence ID" value="NM_129160.4"/>
</dbReference>
<dbReference type="RefSeq" id="NP_973610.1">
    <property type="nucleotide sequence ID" value="NM_201881.2"/>
</dbReference>
<dbReference type="RefSeq" id="NP_973611.1">
    <molecule id="Q9FNY0-1"/>
    <property type="nucleotide sequence ID" value="NM_201882.3"/>
</dbReference>
<dbReference type="SMR" id="Q9FNY0"/>
<dbReference type="BioGRID" id="3518">
    <property type="interactions" value="17"/>
</dbReference>
<dbReference type="DIP" id="DIP-40175N"/>
<dbReference type="FunCoup" id="Q9FNY0">
    <property type="interactions" value="1918"/>
</dbReference>
<dbReference type="IntAct" id="Q9FNY0">
    <property type="interactions" value="13"/>
</dbReference>
<dbReference type="STRING" id="3702.Q9FNY0"/>
<dbReference type="ProteomicsDB" id="222032">
    <molecule id="Q9FNY0-1"/>
</dbReference>
<dbReference type="EnsemblPlants" id="AT2G36010.1">
    <molecule id="Q9FNY0-2"/>
    <property type="protein sequence ID" value="AT2G36010.1"/>
    <property type="gene ID" value="AT2G36010"/>
</dbReference>
<dbReference type="EnsemblPlants" id="AT2G36010.3">
    <molecule id="Q9FNY0-1"/>
    <property type="protein sequence ID" value="AT2G36010.3"/>
    <property type="gene ID" value="AT2G36010"/>
</dbReference>
<dbReference type="GeneID" id="818174"/>
<dbReference type="Gramene" id="AT2G36010.1">
    <molecule id="Q9FNY0-2"/>
    <property type="protein sequence ID" value="AT2G36010.1"/>
    <property type="gene ID" value="AT2G36010"/>
</dbReference>
<dbReference type="Gramene" id="AT2G36010.3">
    <molecule id="Q9FNY0-1"/>
    <property type="protein sequence ID" value="AT2G36010.3"/>
    <property type="gene ID" value="AT2G36010"/>
</dbReference>
<dbReference type="KEGG" id="ath:AT2G36010"/>
<dbReference type="Araport" id="AT2G36010"/>
<dbReference type="TAIR" id="AT2G36010">
    <property type="gene designation" value="E2F3"/>
</dbReference>
<dbReference type="HOGENOM" id="CLU_032091_3_2_1"/>
<dbReference type="InParanoid" id="Q9FNY0"/>
<dbReference type="OMA" id="QTHQICS"/>
<dbReference type="PhylomeDB" id="Q9FNY0"/>
<dbReference type="PRO" id="PR:Q9FNY0"/>
<dbReference type="Proteomes" id="UP000006548">
    <property type="component" value="Chromosome 2"/>
</dbReference>
<dbReference type="ExpressionAtlas" id="Q9FNY0">
    <property type="expression patterns" value="baseline and differential"/>
</dbReference>
<dbReference type="GO" id="GO:0005737">
    <property type="term" value="C:cytoplasm"/>
    <property type="evidence" value="ECO:0007669"/>
    <property type="project" value="UniProtKB-SubCell"/>
</dbReference>
<dbReference type="GO" id="GO:0005634">
    <property type="term" value="C:nucleus"/>
    <property type="evidence" value="ECO:0007669"/>
    <property type="project" value="UniProtKB-SubCell"/>
</dbReference>
<dbReference type="GO" id="GO:0005667">
    <property type="term" value="C:transcription regulator complex"/>
    <property type="evidence" value="ECO:0007669"/>
    <property type="project" value="InterPro"/>
</dbReference>
<dbReference type="GO" id="GO:0003677">
    <property type="term" value="F:DNA binding"/>
    <property type="evidence" value="ECO:0000314"/>
    <property type="project" value="UniProtKB"/>
</dbReference>
<dbReference type="GO" id="GO:0046983">
    <property type="term" value="F:protein dimerization activity"/>
    <property type="evidence" value="ECO:0007669"/>
    <property type="project" value="InterPro"/>
</dbReference>
<dbReference type="GO" id="GO:0000978">
    <property type="term" value="F:RNA polymerase II cis-regulatory region sequence-specific DNA binding"/>
    <property type="evidence" value="ECO:0007669"/>
    <property type="project" value="InterPro"/>
</dbReference>
<dbReference type="GO" id="GO:0045893">
    <property type="term" value="P:positive regulation of DNA-templated transcription"/>
    <property type="evidence" value="ECO:0000314"/>
    <property type="project" value="UniProtKB"/>
</dbReference>
<dbReference type="GO" id="GO:0051446">
    <property type="term" value="P:positive regulation of meiotic cell cycle"/>
    <property type="evidence" value="ECO:0000314"/>
    <property type="project" value="UniProtKB"/>
</dbReference>
<dbReference type="GO" id="GO:0006357">
    <property type="term" value="P:regulation of transcription by RNA polymerase II"/>
    <property type="evidence" value="ECO:0007669"/>
    <property type="project" value="InterPro"/>
</dbReference>
<dbReference type="CDD" id="cd14660">
    <property type="entry name" value="E2F_DD"/>
    <property type="match status" value="1"/>
</dbReference>
<dbReference type="FunFam" id="1.10.10.10:FF:000008">
    <property type="entry name" value="E2F transcription factor 1"/>
    <property type="match status" value="1"/>
</dbReference>
<dbReference type="Gene3D" id="6.10.250.540">
    <property type="match status" value="1"/>
</dbReference>
<dbReference type="Gene3D" id="1.10.10.10">
    <property type="entry name" value="Winged helix-like DNA-binding domain superfamily/Winged helix DNA-binding domain"/>
    <property type="match status" value="1"/>
</dbReference>
<dbReference type="InterPro" id="IPR015633">
    <property type="entry name" value="E2F"/>
</dbReference>
<dbReference type="InterPro" id="IPR037241">
    <property type="entry name" value="E2F-DP_heterodim"/>
</dbReference>
<dbReference type="InterPro" id="IPR032198">
    <property type="entry name" value="E2F_CC-MB"/>
</dbReference>
<dbReference type="InterPro" id="IPR003316">
    <property type="entry name" value="E2F_WHTH_DNA-bd_dom"/>
</dbReference>
<dbReference type="InterPro" id="IPR036388">
    <property type="entry name" value="WH-like_DNA-bd_sf"/>
</dbReference>
<dbReference type="InterPro" id="IPR036390">
    <property type="entry name" value="WH_DNA-bd_sf"/>
</dbReference>
<dbReference type="PANTHER" id="PTHR12081">
    <property type="entry name" value="TRANSCRIPTION FACTOR E2F"/>
    <property type="match status" value="1"/>
</dbReference>
<dbReference type="PANTHER" id="PTHR12081:SF105">
    <property type="entry name" value="TRANSCRIPTION FACTOR E2FA"/>
    <property type="match status" value="1"/>
</dbReference>
<dbReference type="Pfam" id="PF16421">
    <property type="entry name" value="E2F_CC-MB"/>
    <property type="match status" value="1"/>
</dbReference>
<dbReference type="Pfam" id="PF02319">
    <property type="entry name" value="E2F_TDP"/>
    <property type="match status" value="1"/>
</dbReference>
<dbReference type="SMART" id="SM01372">
    <property type="entry name" value="E2F_TDP"/>
    <property type="match status" value="1"/>
</dbReference>
<dbReference type="SUPFAM" id="SSF144074">
    <property type="entry name" value="E2F-DP heterodimerization region"/>
    <property type="match status" value="1"/>
</dbReference>
<dbReference type="SUPFAM" id="SSF46785">
    <property type="entry name" value="Winged helix' DNA-binding domain"/>
    <property type="match status" value="1"/>
</dbReference>
<organism>
    <name type="scientific">Arabidopsis thaliana</name>
    <name type="common">Mouse-ear cress</name>
    <dbReference type="NCBI Taxonomy" id="3702"/>
    <lineage>
        <taxon>Eukaryota</taxon>
        <taxon>Viridiplantae</taxon>
        <taxon>Streptophyta</taxon>
        <taxon>Embryophyta</taxon>
        <taxon>Tracheophyta</taxon>
        <taxon>Spermatophyta</taxon>
        <taxon>Magnoliopsida</taxon>
        <taxon>eudicotyledons</taxon>
        <taxon>Gunneridae</taxon>
        <taxon>Pentapetalae</taxon>
        <taxon>rosids</taxon>
        <taxon>malvids</taxon>
        <taxon>Brassicales</taxon>
        <taxon>Brassicaceae</taxon>
        <taxon>Camelineae</taxon>
        <taxon>Arabidopsis</taxon>
    </lineage>
</organism>
<proteinExistence type="evidence at protein level"/>
<keyword id="KW-0010">Activator</keyword>
<keyword id="KW-0025">Alternative splicing</keyword>
<keyword id="KW-0131">Cell cycle</keyword>
<keyword id="KW-0175">Coiled coil</keyword>
<keyword id="KW-0963">Cytoplasm</keyword>
<keyword id="KW-0238">DNA-binding</keyword>
<keyword id="KW-0539">Nucleus</keyword>
<keyword id="KW-1185">Reference proteome</keyword>
<keyword id="KW-0678">Repressor</keyword>
<keyword id="KW-0804">Transcription</keyword>
<keyword id="KW-0805">Transcription regulation</keyword>
<accession>Q9FNY0</accession>
<accession>Q9C5B5</accession>
<accession>Q9FV69</accession>
<accession>Q9M454</accession>
<accession>Q9SJ49</accession>